<gene>
    <name evidence="1" type="primary">psd</name>
    <name type="ordered locus">Bcep18194_A5589</name>
</gene>
<keyword id="KW-1003">Cell membrane</keyword>
<keyword id="KW-0210">Decarboxylase</keyword>
<keyword id="KW-0444">Lipid biosynthesis</keyword>
<keyword id="KW-0443">Lipid metabolism</keyword>
<keyword id="KW-0456">Lyase</keyword>
<keyword id="KW-0472">Membrane</keyword>
<keyword id="KW-0594">Phospholipid biosynthesis</keyword>
<keyword id="KW-1208">Phospholipid metabolism</keyword>
<keyword id="KW-0670">Pyruvate</keyword>
<keyword id="KW-0865">Zymogen</keyword>
<protein>
    <recommendedName>
        <fullName evidence="1">Phosphatidylserine decarboxylase proenzyme</fullName>
        <ecNumber evidence="1">4.1.1.65</ecNumber>
    </recommendedName>
    <component>
        <recommendedName>
            <fullName evidence="1">Phosphatidylserine decarboxylase alpha chain</fullName>
        </recommendedName>
    </component>
    <component>
        <recommendedName>
            <fullName evidence="1">Phosphatidylserine decarboxylase beta chain</fullName>
        </recommendedName>
    </component>
</protein>
<name>PSD_BURL3</name>
<accession>Q39ED3</accession>
<proteinExistence type="inferred from homology"/>
<reference key="1">
    <citation type="submission" date="2005-10" db="EMBL/GenBank/DDBJ databases">
        <title>Complete sequence of chromosome 1 of Burkholderia sp. 383.</title>
        <authorList>
            <consortium name="US DOE Joint Genome Institute"/>
            <person name="Copeland A."/>
            <person name="Lucas S."/>
            <person name="Lapidus A."/>
            <person name="Barry K."/>
            <person name="Detter J.C."/>
            <person name="Glavina T."/>
            <person name="Hammon N."/>
            <person name="Israni S."/>
            <person name="Pitluck S."/>
            <person name="Chain P."/>
            <person name="Malfatti S."/>
            <person name="Shin M."/>
            <person name="Vergez L."/>
            <person name="Schmutz J."/>
            <person name="Larimer F."/>
            <person name="Land M."/>
            <person name="Kyrpides N."/>
            <person name="Lykidis A."/>
            <person name="Richardson P."/>
        </authorList>
    </citation>
    <scope>NUCLEOTIDE SEQUENCE [LARGE SCALE GENOMIC DNA]</scope>
    <source>
        <strain>ATCC 17760 / DSM 23089 / LMG 22485 / NCIMB 9086 / R18194 / 383</strain>
    </source>
</reference>
<comment type="function">
    <text evidence="1">Catalyzes the formation of phosphatidylethanolamine (PtdEtn) from phosphatidylserine (PtdSer).</text>
</comment>
<comment type="catalytic activity">
    <reaction evidence="1">
        <text>a 1,2-diacyl-sn-glycero-3-phospho-L-serine + H(+) = a 1,2-diacyl-sn-glycero-3-phosphoethanolamine + CO2</text>
        <dbReference type="Rhea" id="RHEA:20828"/>
        <dbReference type="ChEBI" id="CHEBI:15378"/>
        <dbReference type="ChEBI" id="CHEBI:16526"/>
        <dbReference type="ChEBI" id="CHEBI:57262"/>
        <dbReference type="ChEBI" id="CHEBI:64612"/>
        <dbReference type="EC" id="4.1.1.65"/>
    </reaction>
</comment>
<comment type="cofactor">
    <cofactor evidence="1">
        <name>pyruvate</name>
        <dbReference type="ChEBI" id="CHEBI:15361"/>
    </cofactor>
    <text evidence="1">Binds 1 pyruvoyl group covalently per subunit.</text>
</comment>
<comment type="pathway">
    <text evidence="1">Phospholipid metabolism; phosphatidylethanolamine biosynthesis; phosphatidylethanolamine from CDP-diacylglycerol: step 2/2.</text>
</comment>
<comment type="subunit">
    <text evidence="1">Heterodimer of a large membrane-associated beta subunit and a small pyruvoyl-containing alpha subunit.</text>
</comment>
<comment type="subcellular location">
    <subcellularLocation>
        <location evidence="1">Cell membrane</location>
        <topology evidence="1">Peripheral membrane protein</topology>
    </subcellularLocation>
</comment>
<comment type="PTM">
    <text evidence="1">Is synthesized initially as an inactive proenzyme. Formation of the active enzyme involves a self-maturation process in which the active site pyruvoyl group is generated from an internal serine residue via an autocatalytic post-translational modification. Two non-identical subunits are generated from the proenzyme in this reaction, and the pyruvate is formed at the N-terminus of the alpha chain, which is derived from the carboxyl end of the proenzyme. The post-translation cleavage follows an unusual pathway, termed non-hydrolytic serinolysis, in which the side chain hydroxyl group of the serine supplies its oxygen atom to form the C-terminus of the beta chain, while the remainder of the serine residue undergoes an oxidative deamination to produce ammonia and the pyruvoyl prosthetic group on the alpha chain.</text>
</comment>
<comment type="similarity">
    <text evidence="1">Belongs to the phosphatidylserine decarboxylase family. PSD-A subfamily.</text>
</comment>
<organism>
    <name type="scientific">Burkholderia lata (strain ATCC 17760 / DSM 23089 / LMG 22485 / NCIMB 9086 / R18194 / 383)</name>
    <dbReference type="NCBI Taxonomy" id="482957"/>
    <lineage>
        <taxon>Bacteria</taxon>
        <taxon>Pseudomonadati</taxon>
        <taxon>Pseudomonadota</taxon>
        <taxon>Betaproteobacteria</taxon>
        <taxon>Burkholderiales</taxon>
        <taxon>Burkholderiaceae</taxon>
        <taxon>Burkholderia</taxon>
        <taxon>Burkholderia cepacia complex</taxon>
    </lineage>
</organism>
<feature type="chain" id="PRO_0000262195" description="Phosphatidylserine decarboxylase beta chain" evidence="1">
    <location>
        <begin position="1"/>
        <end position="181"/>
    </location>
</feature>
<feature type="chain" id="PRO_0000262196" description="Phosphatidylserine decarboxylase alpha chain" evidence="1">
    <location>
        <begin position="182"/>
        <end position="214"/>
    </location>
</feature>
<feature type="active site" description="Schiff-base intermediate with substrate; via pyruvic acid" evidence="1">
    <location>
        <position position="182"/>
    </location>
</feature>
<feature type="site" description="Cleavage (non-hydrolytic); by autocatalysis" evidence="1">
    <location>
        <begin position="181"/>
        <end position="182"/>
    </location>
</feature>
<feature type="modified residue" description="Pyruvic acid (Ser); by autocatalysis" evidence="1">
    <location>
        <position position="182"/>
    </location>
</feature>
<dbReference type="EC" id="4.1.1.65" evidence="1"/>
<dbReference type="EMBL" id="CP000151">
    <property type="protein sequence ID" value="ABB09183.1"/>
    <property type="molecule type" value="Genomic_DNA"/>
</dbReference>
<dbReference type="RefSeq" id="WP_011352710.1">
    <property type="nucleotide sequence ID" value="NZ_WNDV01000048.1"/>
</dbReference>
<dbReference type="KEGG" id="bur:Bcep18194_A5589"/>
<dbReference type="PATRIC" id="fig|482957.22.peg.2555"/>
<dbReference type="HOGENOM" id="CLU_072492_0_0_4"/>
<dbReference type="UniPathway" id="UPA00558">
    <property type="reaction ID" value="UER00616"/>
</dbReference>
<dbReference type="Proteomes" id="UP000002705">
    <property type="component" value="Chromosome 1"/>
</dbReference>
<dbReference type="GO" id="GO:0005886">
    <property type="term" value="C:plasma membrane"/>
    <property type="evidence" value="ECO:0007669"/>
    <property type="project" value="UniProtKB-SubCell"/>
</dbReference>
<dbReference type="GO" id="GO:0004609">
    <property type="term" value="F:phosphatidylserine decarboxylase activity"/>
    <property type="evidence" value="ECO:0007669"/>
    <property type="project" value="UniProtKB-UniRule"/>
</dbReference>
<dbReference type="GO" id="GO:0006646">
    <property type="term" value="P:phosphatidylethanolamine biosynthetic process"/>
    <property type="evidence" value="ECO:0007669"/>
    <property type="project" value="UniProtKB-UniRule"/>
</dbReference>
<dbReference type="HAMAP" id="MF_00664">
    <property type="entry name" value="PS_decarb_PSD_A"/>
    <property type="match status" value="1"/>
</dbReference>
<dbReference type="InterPro" id="IPR003817">
    <property type="entry name" value="PS_Dcarbxylase"/>
</dbReference>
<dbReference type="InterPro" id="IPR033175">
    <property type="entry name" value="PSD-A"/>
</dbReference>
<dbReference type="NCBIfam" id="TIGR00164">
    <property type="entry name" value="AS_decarb"/>
    <property type="match status" value="1"/>
</dbReference>
<dbReference type="NCBIfam" id="NF003678">
    <property type="entry name" value="PRK05305.1-2"/>
    <property type="match status" value="1"/>
</dbReference>
<dbReference type="NCBIfam" id="NF003680">
    <property type="entry name" value="PRK05305.1-5"/>
    <property type="match status" value="1"/>
</dbReference>
<dbReference type="NCBIfam" id="NF003685">
    <property type="entry name" value="PRK05305.2-5"/>
    <property type="match status" value="1"/>
</dbReference>
<dbReference type="PANTHER" id="PTHR35809">
    <property type="entry name" value="ARCHAETIDYLSERINE DECARBOXYLASE PROENZYME-RELATED"/>
    <property type="match status" value="1"/>
</dbReference>
<dbReference type="PANTHER" id="PTHR35809:SF1">
    <property type="entry name" value="ARCHAETIDYLSERINE DECARBOXYLASE PROENZYME-RELATED"/>
    <property type="match status" value="1"/>
</dbReference>
<dbReference type="Pfam" id="PF02666">
    <property type="entry name" value="PS_Dcarbxylase"/>
    <property type="match status" value="1"/>
</dbReference>
<sequence length="214" mass="23430">MNYPHPIIAREGWPFIAIAAVIALLIHAVGGFGFAWPFWLLLVFVVQFFRDPQRPIPAQPNAVLCPADGRIVAVETAQDPYANREALKISVFMNVFNVHSQRSPVDGAISKVEYFPGAFLNAAIDKASTENERNAVVIQTASGKTVTAVQIAGLVARRILCYVRAGEPLSRGQRYGFIRFGSRVDVYLPLGSRAKVSIGEKVYASSTILAELEQ</sequence>
<evidence type="ECO:0000255" key="1">
    <source>
        <dbReference type="HAMAP-Rule" id="MF_00664"/>
    </source>
</evidence>